<gene>
    <name evidence="1" type="primary">glpK</name>
    <name type="ordered locus">PM1446</name>
</gene>
<dbReference type="EC" id="2.7.1.30" evidence="1"/>
<dbReference type="EMBL" id="AE004439">
    <property type="protein sequence ID" value="AAK03530.1"/>
    <property type="molecule type" value="Genomic_DNA"/>
</dbReference>
<dbReference type="RefSeq" id="WP_010907166.1">
    <property type="nucleotide sequence ID" value="NC_002663.1"/>
</dbReference>
<dbReference type="SMR" id="P57944"/>
<dbReference type="STRING" id="272843.PM1446"/>
<dbReference type="EnsemblBacteria" id="AAK03530">
    <property type="protein sequence ID" value="AAK03530"/>
    <property type="gene ID" value="PM1446"/>
</dbReference>
<dbReference type="KEGG" id="pmu:PM1446"/>
<dbReference type="PATRIC" id="fig|272843.6.peg.1460"/>
<dbReference type="HOGENOM" id="CLU_009281_2_3_6"/>
<dbReference type="OrthoDB" id="9805576at2"/>
<dbReference type="UniPathway" id="UPA00618">
    <property type="reaction ID" value="UER00672"/>
</dbReference>
<dbReference type="Proteomes" id="UP000000809">
    <property type="component" value="Chromosome"/>
</dbReference>
<dbReference type="GO" id="GO:0005829">
    <property type="term" value="C:cytosol"/>
    <property type="evidence" value="ECO:0007669"/>
    <property type="project" value="TreeGrafter"/>
</dbReference>
<dbReference type="GO" id="GO:0005524">
    <property type="term" value="F:ATP binding"/>
    <property type="evidence" value="ECO:0007669"/>
    <property type="project" value="UniProtKB-UniRule"/>
</dbReference>
<dbReference type="GO" id="GO:0004370">
    <property type="term" value="F:glycerol kinase activity"/>
    <property type="evidence" value="ECO:0000250"/>
    <property type="project" value="UniProtKB"/>
</dbReference>
<dbReference type="GO" id="GO:0019563">
    <property type="term" value="P:glycerol catabolic process"/>
    <property type="evidence" value="ECO:0007669"/>
    <property type="project" value="UniProtKB-UniRule"/>
</dbReference>
<dbReference type="GO" id="GO:0006071">
    <property type="term" value="P:glycerol metabolic process"/>
    <property type="evidence" value="ECO:0000250"/>
    <property type="project" value="UniProtKB"/>
</dbReference>
<dbReference type="GO" id="GO:0006072">
    <property type="term" value="P:glycerol-3-phosphate metabolic process"/>
    <property type="evidence" value="ECO:0007669"/>
    <property type="project" value="InterPro"/>
</dbReference>
<dbReference type="CDD" id="cd07786">
    <property type="entry name" value="FGGY_EcGK_like"/>
    <property type="match status" value="1"/>
</dbReference>
<dbReference type="FunFam" id="3.30.420.40:FF:000007">
    <property type="entry name" value="Glycerol kinase"/>
    <property type="match status" value="1"/>
</dbReference>
<dbReference type="FunFam" id="3.30.420.40:FF:000008">
    <property type="entry name" value="Glycerol kinase"/>
    <property type="match status" value="1"/>
</dbReference>
<dbReference type="Gene3D" id="3.30.420.40">
    <property type="match status" value="2"/>
</dbReference>
<dbReference type="HAMAP" id="MF_00186">
    <property type="entry name" value="Glycerol_kin"/>
    <property type="match status" value="1"/>
</dbReference>
<dbReference type="InterPro" id="IPR043129">
    <property type="entry name" value="ATPase_NBD"/>
</dbReference>
<dbReference type="InterPro" id="IPR000577">
    <property type="entry name" value="Carb_kinase_FGGY"/>
</dbReference>
<dbReference type="InterPro" id="IPR018483">
    <property type="entry name" value="Carb_kinase_FGGY_CS"/>
</dbReference>
<dbReference type="InterPro" id="IPR018485">
    <property type="entry name" value="FGGY_C"/>
</dbReference>
<dbReference type="InterPro" id="IPR018484">
    <property type="entry name" value="FGGY_N"/>
</dbReference>
<dbReference type="InterPro" id="IPR005999">
    <property type="entry name" value="Glycerol_kin"/>
</dbReference>
<dbReference type="NCBIfam" id="TIGR01311">
    <property type="entry name" value="glycerol_kin"/>
    <property type="match status" value="1"/>
</dbReference>
<dbReference type="NCBIfam" id="NF000756">
    <property type="entry name" value="PRK00047.1"/>
    <property type="match status" value="1"/>
</dbReference>
<dbReference type="PANTHER" id="PTHR10196:SF69">
    <property type="entry name" value="GLYCEROL KINASE"/>
    <property type="match status" value="1"/>
</dbReference>
<dbReference type="PANTHER" id="PTHR10196">
    <property type="entry name" value="SUGAR KINASE"/>
    <property type="match status" value="1"/>
</dbReference>
<dbReference type="Pfam" id="PF02782">
    <property type="entry name" value="FGGY_C"/>
    <property type="match status" value="1"/>
</dbReference>
<dbReference type="Pfam" id="PF00370">
    <property type="entry name" value="FGGY_N"/>
    <property type="match status" value="1"/>
</dbReference>
<dbReference type="PIRSF" id="PIRSF000538">
    <property type="entry name" value="GlpK"/>
    <property type="match status" value="1"/>
</dbReference>
<dbReference type="SUPFAM" id="SSF53067">
    <property type="entry name" value="Actin-like ATPase domain"/>
    <property type="match status" value="2"/>
</dbReference>
<dbReference type="PROSITE" id="PS00933">
    <property type="entry name" value="FGGY_KINASES_1"/>
    <property type="match status" value="1"/>
</dbReference>
<dbReference type="PROSITE" id="PS00445">
    <property type="entry name" value="FGGY_KINASES_2"/>
    <property type="match status" value="1"/>
</dbReference>
<evidence type="ECO:0000255" key="1">
    <source>
        <dbReference type="HAMAP-Rule" id="MF_00186"/>
    </source>
</evidence>
<name>GLPK_PASMU</name>
<proteinExistence type="inferred from homology"/>
<feature type="chain" id="PRO_0000059474" description="Glycerol kinase">
    <location>
        <begin position="1"/>
        <end position="502"/>
    </location>
</feature>
<feature type="binding site" evidence="1">
    <location>
        <position position="14"/>
    </location>
    <ligand>
        <name>ADP</name>
        <dbReference type="ChEBI" id="CHEBI:456216"/>
    </ligand>
</feature>
<feature type="binding site" evidence="1">
    <location>
        <position position="14"/>
    </location>
    <ligand>
        <name>ATP</name>
        <dbReference type="ChEBI" id="CHEBI:30616"/>
    </ligand>
</feature>
<feature type="binding site" evidence="1">
    <location>
        <position position="14"/>
    </location>
    <ligand>
        <name>sn-glycerol 3-phosphate</name>
        <dbReference type="ChEBI" id="CHEBI:57597"/>
    </ligand>
</feature>
<feature type="binding site" evidence="1">
    <location>
        <position position="15"/>
    </location>
    <ligand>
        <name>ATP</name>
        <dbReference type="ChEBI" id="CHEBI:30616"/>
    </ligand>
</feature>
<feature type="binding site" evidence="1">
    <location>
        <position position="16"/>
    </location>
    <ligand>
        <name>ATP</name>
        <dbReference type="ChEBI" id="CHEBI:30616"/>
    </ligand>
</feature>
<feature type="binding site" evidence="1">
    <location>
        <position position="18"/>
    </location>
    <ligand>
        <name>ADP</name>
        <dbReference type="ChEBI" id="CHEBI:456216"/>
    </ligand>
</feature>
<feature type="binding site" evidence="1">
    <location>
        <position position="84"/>
    </location>
    <ligand>
        <name>glycerol</name>
        <dbReference type="ChEBI" id="CHEBI:17754"/>
    </ligand>
</feature>
<feature type="binding site" evidence="1">
    <location>
        <position position="84"/>
    </location>
    <ligand>
        <name>sn-glycerol 3-phosphate</name>
        <dbReference type="ChEBI" id="CHEBI:57597"/>
    </ligand>
</feature>
<feature type="binding site" evidence="1">
    <location>
        <position position="85"/>
    </location>
    <ligand>
        <name>glycerol</name>
        <dbReference type="ChEBI" id="CHEBI:17754"/>
    </ligand>
</feature>
<feature type="binding site" evidence="1">
    <location>
        <position position="85"/>
    </location>
    <ligand>
        <name>sn-glycerol 3-phosphate</name>
        <dbReference type="ChEBI" id="CHEBI:57597"/>
    </ligand>
</feature>
<feature type="binding site" evidence="1">
    <location>
        <position position="136"/>
    </location>
    <ligand>
        <name>glycerol</name>
        <dbReference type="ChEBI" id="CHEBI:17754"/>
    </ligand>
</feature>
<feature type="binding site" evidence="1">
    <location>
        <position position="136"/>
    </location>
    <ligand>
        <name>sn-glycerol 3-phosphate</name>
        <dbReference type="ChEBI" id="CHEBI:57597"/>
    </ligand>
</feature>
<feature type="binding site" evidence="1">
    <location>
        <position position="246"/>
    </location>
    <ligand>
        <name>glycerol</name>
        <dbReference type="ChEBI" id="CHEBI:17754"/>
    </ligand>
</feature>
<feature type="binding site" evidence="1">
    <location>
        <position position="246"/>
    </location>
    <ligand>
        <name>sn-glycerol 3-phosphate</name>
        <dbReference type="ChEBI" id="CHEBI:57597"/>
    </ligand>
</feature>
<feature type="binding site" evidence="1">
    <location>
        <position position="247"/>
    </location>
    <ligand>
        <name>glycerol</name>
        <dbReference type="ChEBI" id="CHEBI:17754"/>
    </ligand>
</feature>
<feature type="binding site" evidence="1">
    <location>
        <position position="268"/>
    </location>
    <ligand>
        <name>ADP</name>
        <dbReference type="ChEBI" id="CHEBI:456216"/>
    </ligand>
</feature>
<feature type="binding site" evidence="1">
    <location>
        <position position="268"/>
    </location>
    <ligand>
        <name>ATP</name>
        <dbReference type="ChEBI" id="CHEBI:30616"/>
    </ligand>
</feature>
<feature type="binding site" evidence="1">
    <location>
        <position position="311"/>
    </location>
    <ligand>
        <name>ADP</name>
        <dbReference type="ChEBI" id="CHEBI:456216"/>
    </ligand>
</feature>
<feature type="binding site" evidence="1">
    <location>
        <position position="311"/>
    </location>
    <ligand>
        <name>ATP</name>
        <dbReference type="ChEBI" id="CHEBI:30616"/>
    </ligand>
</feature>
<feature type="binding site" evidence="1">
    <location>
        <position position="315"/>
    </location>
    <ligand>
        <name>ATP</name>
        <dbReference type="ChEBI" id="CHEBI:30616"/>
    </ligand>
</feature>
<feature type="binding site" evidence="1">
    <location>
        <position position="412"/>
    </location>
    <ligand>
        <name>ADP</name>
        <dbReference type="ChEBI" id="CHEBI:456216"/>
    </ligand>
</feature>
<feature type="binding site" evidence="1">
    <location>
        <position position="412"/>
    </location>
    <ligand>
        <name>ATP</name>
        <dbReference type="ChEBI" id="CHEBI:30616"/>
    </ligand>
</feature>
<feature type="binding site" evidence="1">
    <location>
        <position position="416"/>
    </location>
    <ligand>
        <name>ADP</name>
        <dbReference type="ChEBI" id="CHEBI:456216"/>
    </ligand>
</feature>
<accession>P57944</accession>
<protein>
    <recommendedName>
        <fullName evidence="1">Glycerol kinase</fullName>
        <ecNumber evidence="1">2.7.1.30</ecNumber>
    </recommendedName>
    <alternativeName>
        <fullName evidence="1">ATP:glycerol 3-phosphotransferase</fullName>
    </alternativeName>
    <alternativeName>
        <fullName evidence="1">Glycerokinase</fullName>
        <shortName evidence="1">GK</shortName>
    </alternativeName>
</protein>
<sequence length="502" mass="55661">MTDKKYIIALDQGTTSSRAVLLDHDANIVEIAQREFTQIYPQAGWVEHNPMEIWATQSSTLNEVVAKAGITADQIAAIGITNQRETTIVWEKETGKPIYNAIVWQCRRTTEITDKLKADGHEDYIRQTTGLVVDPYFSGTKIKWILDNVEGAREQAERGELLFGTVDTWLVWKLTQGRAHVTDYTNASRTMLFNIHTLQWDDNMLAILGIPRAMLPEVRNSSEIYGQTNIGGKGGVRIPVAGMAGDQQAALYGHLCVNAGQAKNTYGTGCFMLMHTGDNAVQSQNGLLTTIACNAKGEPAYALEGSIFMGGASIQWLRDELKIVHDSYDSEYFATRVPDCNGVYVVPAFTGLGAPYWDPYARGAIFGLSRGANRNHIVRATLESIAYQTRDVLEAMQSDSGQTLQALRVDGGATENNFLMQFQADILATKVERPKVKEVTALGAAYLAGLATGFWKDLSELRDKASIEKTFVPDGDEAKRTRRYKGWKKAVKRALEWEKEEE</sequence>
<comment type="function">
    <text evidence="1">Key enzyme in the regulation of glycerol uptake and metabolism. Catalyzes the phosphorylation of glycerol to yield sn-glycerol 3-phosphate.</text>
</comment>
<comment type="catalytic activity">
    <reaction evidence="1">
        <text>glycerol + ATP = sn-glycerol 3-phosphate + ADP + H(+)</text>
        <dbReference type="Rhea" id="RHEA:21644"/>
        <dbReference type="ChEBI" id="CHEBI:15378"/>
        <dbReference type="ChEBI" id="CHEBI:17754"/>
        <dbReference type="ChEBI" id="CHEBI:30616"/>
        <dbReference type="ChEBI" id="CHEBI:57597"/>
        <dbReference type="ChEBI" id="CHEBI:456216"/>
        <dbReference type="EC" id="2.7.1.30"/>
    </reaction>
</comment>
<comment type="activity regulation">
    <text evidence="1">Inhibited by fructose 1,6-bisphosphate (FBP).</text>
</comment>
<comment type="pathway">
    <text evidence="1">Polyol metabolism; glycerol degradation via glycerol kinase pathway; sn-glycerol 3-phosphate from glycerol: step 1/1.</text>
</comment>
<comment type="similarity">
    <text evidence="1">Belongs to the FGGY kinase family.</text>
</comment>
<reference key="1">
    <citation type="journal article" date="2001" name="Proc. Natl. Acad. Sci. U.S.A.">
        <title>Complete genomic sequence of Pasteurella multocida Pm70.</title>
        <authorList>
            <person name="May B.J."/>
            <person name="Zhang Q."/>
            <person name="Li L.L."/>
            <person name="Paustian M.L."/>
            <person name="Whittam T.S."/>
            <person name="Kapur V."/>
        </authorList>
    </citation>
    <scope>NUCLEOTIDE SEQUENCE [LARGE SCALE GENOMIC DNA]</scope>
    <source>
        <strain>Pm70</strain>
    </source>
</reference>
<keyword id="KW-0067">ATP-binding</keyword>
<keyword id="KW-0319">Glycerol metabolism</keyword>
<keyword id="KW-0418">Kinase</keyword>
<keyword id="KW-0547">Nucleotide-binding</keyword>
<keyword id="KW-1185">Reference proteome</keyword>
<keyword id="KW-0808">Transferase</keyword>
<organism>
    <name type="scientific">Pasteurella multocida (strain Pm70)</name>
    <dbReference type="NCBI Taxonomy" id="272843"/>
    <lineage>
        <taxon>Bacteria</taxon>
        <taxon>Pseudomonadati</taxon>
        <taxon>Pseudomonadota</taxon>
        <taxon>Gammaproteobacteria</taxon>
        <taxon>Pasteurellales</taxon>
        <taxon>Pasteurellaceae</taxon>
        <taxon>Pasteurella</taxon>
    </lineage>
</organism>